<evidence type="ECO:0000255" key="1">
    <source>
        <dbReference type="HAMAP-Rule" id="MF_00362"/>
    </source>
</evidence>
<evidence type="ECO:0000305" key="2"/>
<comment type="function">
    <text evidence="1">Forms part of the ribosomal stalk, playing a central role in the interaction of the ribosome with GTP-bound translation factors.</text>
</comment>
<comment type="subunit">
    <text evidence="1">Part of the ribosomal stalk of the 50S ribosomal subunit. The N-terminus interacts with L11 and the large rRNA to form the base of the stalk. The C-terminus forms an elongated spine to which L12 dimers bind in a sequential fashion forming a multimeric L10(L12)X complex.</text>
</comment>
<comment type="similarity">
    <text evidence="1">Belongs to the universal ribosomal protein uL10 family.</text>
</comment>
<keyword id="KW-0687">Ribonucleoprotein</keyword>
<keyword id="KW-0689">Ribosomal protein</keyword>
<keyword id="KW-0694">RNA-binding</keyword>
<keyword id="KW-0699">rRNA-binding</keyword>
<feature type="chain" id="PRO_1000079546" description="Large ribosomal subunit protein uL10">
    <location>
        <begin position="1"/>
        <end position="163"/>
    </location>
</feature>
<gene>
    <name evidence="1" type="primary">rplJ</name>
    <name type="ordered locus">HSM_0038</name>
</gene>
<dbReference type="EMBL" id="CP000947">
    <property type="protein sequence ID" value="ACA32018.1"/>
    <property type="molecule type" value="Genomic_DNA"/>
</dbReference>
<dbReference type="RefSeq" id="WP_012341232.1">
    <property type="nucleotide sequence ID" value="NC_010519.1"/>
</dbReference>
<dbReference type="STRING" id="228400.HSM_0038"/>
<dbReference type="GeneID" id="31486313"/>
<dbReference type="KEGG" id="hsm:HSM_0038"/>
<dbReference type="HOGENOM" id="CLU_092227_0_2_6"/>
<dbReference type="GO" id="GO:0015934">
    <property type="term" value="C:large ribosomal subunit"/>
    <property type="evidence" value="ECO:0007669"/>
    <property type="project" value="InterPro"/>
</dbReference>
<dbReference type="GO" id="GO:0070180">
    <property type="term" value="F:large ribosomal subunit rRNA binding"/>
    <property type="evidence" value="ECO:0007669"/>
    <property type="project" value="UniProtKB-UniRule"/>
</dbReference>
<dbReference type="GO" id="GO:0003735">
    <property type="term" value="F:structural constituent of ribosome"/>
    <property type="evidence" value="ECO:0007669"/>
    <property type="project" value="InterPro"/>
</dbReference>
<dbReference type="GO" id="GO:0006412">
    <property type="term" value="P:translation"/>
    <property type="evidence" value="ECO:0007669"/>
    <property type="project" value="UniProtKB-UniRule"/>
</dbReference>
<dbReference type="CDD" id="cd05797">
    <property type="entry name" value="Ribosomal_L10"/>
    <property type="match status" value="1"/>
</dbReference>
<dbReference type="FunFam" id="3.30.70.1730:FF:000001">
    <property type="entry name" value="50S ribosomal protein L10"/>
    <property type="match status" value="1"/>
</dbReference>
<dbReference type="Gene3D" id="3.30.70.1730">
    <property type="match status" value="1"/>
</dbReference>
<dbReference type="Gene3D" id="6.10.250.2350">
    <property type="match status" value="1"/>
</dbReference>
<dbReference type="HAMAP" id="MF_00362">
    <property type="entry name" value="Ribosomal_uL10"/>
    <property type="match status" value="1"/>
</dbReference>
<dbReference type="InterPro" id="IPR001790">
    <property type="entry name" value="Ribosomal_uL10"/>
</dbReference>
<dbReference type="InterPro" id="IPR043141">
    <property type="entry name" value="Ribosomal_uL10-like_sf"/>
</dbReference>
<dbReference type="InterPro" id="IPR022973">
    <property type="entry name" value="Ribosomal_uL10_bac"/>
</dbReference>
<dbReference type="InterPro" id="IPR047865">
    <property type="entry name" value="Ribosomal_uL10_bac_type"/>
</dbReference>
<dbReference type="InterPro" id="IPR002363">
    <property type="entry name" value="Ribosomal_uL10_CS_bac"/>
</dbReference>
<dbReference type="NCBIfam" id="NF000955">
    <property type="entry name" value="PRK00099.1-1"/>
    <property type="match status" value="1"/>
</dbReference>
<dbReference type="PANTHER" id="PTHR11560">
    <property type="entry name" value="39S RIBOSOMAL PROTEIN L10, MITOCHONDRIAL"/>
    <property type="match status" value="1"/>
</dbReference>
<dbReference type="Pfam" id="PF00466">
    <property type="entry name" value="Ribosomal_L10"/>
    <property type="match status" value="1"/>
</dbReference>
<dbReference type="SUPFAM" id="SSF160369">
    <property type="entry name" value="Ribosomal protein L10-like"/>
    <property type="match status" value="1"/>
</dbReference>
<dbReference type="PROSITE" id="PS01109">
    <property type="entry name" value="RIBOSOMAL_L10"/>
    <property type="match status" value="1"/>
</dbReference>
<reference key="1">
    <citation type="submission" date="2008-02" db="EMBL/GenBank/DDBJ databases">
        <title>Complete sequence of Haemophilus somnus 2336.</title>
        <authorList>
            <consortium name="US DOE Joint Genome Institute"/>
            <person name="Siddaramappa S."/>
            <person name="Duncan A.J."/>
            <person name="Challacombe J.F."/>
            <person name="Rainey D."/>
            <person name="Gillaspy A.F."/>
            <person name="Carson M."/>
            <person name="Gipson J."/>
            <person name="Gipson M."/>
            <person name="Bruce D."/>
            <person name="Detter J.C."/>
            <person name="Han C.S."/>
            <person name="Land M."/>
            <person name="Tapia R."/>
            <person name="Thompson L.S."/>
            <person name="Orvis J."/>
            <person name="Zaitshik J."/>
            <person name="Barnes G."/>
            <person name="Brettin T.S."/>
            <person name="Dyer D.W."/>
            <person name="Inzana T.J."/>
        </authorList>
    </citation>
    <scope>NUCLEOTIDE SEQUENCE [LARGE SCALE GENOMIC DNA]</scope>
    <source>
        <strain>2336</strain>
    </source>
</reference>
<organism>
    <name type="scientific">Histophilus somni (strain 2336)</name>
    <name type="common">Haemophilus somnus</name>
    <dbReference type="NCBI Taxonomy" id="228400"/>
    <lineage>
        <taxon>Bacteria</taxon>
        <taxon>Pseudomonadati</taxon>
        <taxon>Pseudomonadota</taxon>
        <taxon>Gammaproteobacteria</taxon>
        <taxon>Pasteurellales</taxon>
        <taxon>Pasteurellaceae</taxon>
        <taxon>Histophilus</taxon>
    </lineage>
</organism>
<protein>
    <recommendedName>
        <fullName evidence="1">Large ribosomal subunit protein uL10</fullName>
    </recommendedName>
    <alternativeName>
        <fullName evidence="2">50S ribosomal protein L10</fullName>
    </alternativeName>
</protein>
<proteinExistence type="inferred from homology"/>
<accession>B0UUZ6</accession>
<sequence>MALNLQDKQAIVAEVNEAAKGALSAVIADSRGVTVDKMTELRKAAREAGVSMRVVRNTLLRRAVEGTDFECLTDTFVGPTLIAFSNEHPGAAARLFKDFAKANDKFEIKGAAFEGKIQNVEFLATLPTYEEAIARLMGTMKEAAAGKLARTLAAYRDKLQEAA</sequence>
<name>RL10_HISS2</name>